<protein>
    <recommendedName>
        <fullName evidence="1">Acetyl-coenzyme A carboxylase carboxyl transferase subunit alpha</fullName>
        <shortName evidence="1">ACCase subunit alpha</shortName>
        <shortName evidence="1">Acetyl-CoA carboxylase carboxyltransferase subunit alpha</shortName>
        <ecNumber evidence="1">2.1.3.15</ecNumber>
    </recommendedName>
</protein>
<reference key="1">
    <citation type="journal article" date="2008" name="Genome Biol.">
        <title>Encapsulated in silica: genome, proteome and physiology of the thermophilic bacterium Anoxybacillus flavithermus WK1.</title>
        <authorList>
            <person name="Saw J.H."/>
            <person name="Mountain B.W."/>
            <person name="Feng L."/>
            <person name="Omelchenko M.V."/>
            <person name="Hou S."/>
            <person name="Saito J.A."/>
            <person name="Stott M.B."/>
            <person name="Li D."/>
            <person name="Zhao G."/>
            <person name="Wu J."/>
            <person name="Galperin M.Y."/>
            <person name="Koonin E.V."/>
            <person name="Makarova K.S."/>
            <person name="Wolf Y.I."/>
            <person name="Rigden D.J."/>
            <person name="Dunfield P.F."/>
            <person name="Wang L."/>
            <person name="Alam M."/>
        </authorList>
    </citation>
    <scope>NUCLEOTIDE SEQUENCE [LARGE SCALE GENOMIC DNA]</scope>
    <source>
        <strain>DSM 21510 / WK1</strain>
    </source>
</reference>
<feature type="chain" id="PRO_1000134455" description="Acetyl-coenzyme A carboxylase carboxyl transferase subunit alpha">
    <location>
        <begin position="1"/>
        <end position="325"/>
    </location>
</feature>
<feature type="domain" description="CoA carboxyltransferase C-terminal" evidence="2">
    <location>
        <begin position="35"/>
        <end position="292"/>
    </location>
</feature>
<gene>
    <name evidence="1" type="primary">accA</name>
    <name type="ordered locus">Aflv_0498</name>
</gene>
<dbReference type="EC" id="2.1.3.15" evidence="1"/>
<dbReference type="EMBL" id="CP000922">
    <property type="protein sequence ID" value="ACJ32882.1"/>
    <property type="molecule type" value="Genomic_DNA"/>
</dbReference>
<dbReference type="RefSeq" id="WP_012574202.1">
    <property type="nucleotide sequence ID" value="NC_011567.1"/>
</dbReference>
<dbReference type="SMR" id="B7GGT0"/>
<dbReference type="STRING" id="491915.Aflv_0498"/>
<dbReference type="GeneID" id="7036755"/>
<dbReference type="KEGG" id="afl:Aflv_0498"/>
<dbReference type="PATRIC" id="fig|491915.6.peg.510"/>
<dbReference type="eggNOG" id="COG0825">
    <property type="taxonomic scope" value="Bacteria"/>
</dbReference>
<dbReference type="HOGENOM" id="CLU_015486_0_2_9"/>
<dbReference type="UniPathway" id="UPA00655">
    <property type="reaction ID" value="UER00711"/>
</dbReference>
<dbReference type="Proteomes" id="UP000000742">
    <property type="component" value="Chromosome"/>
</dbReference>
<dbReference type="GO" id="GO:0009317">
    <property type="term" value="C:acetyl-CoA carboxylase complex"/>
    <property type="evidence" value="ECO:0007669"/>
    <property type="project" value="InterPro"/>
</dbReference>
<dbReference type="GO" id="GO:0003989">
    <property type="term" value="F:acetyl-CoA carboxylase activity"/>
    <property type="evidence" value="ECO:0007669"/>
    <property type="project" value="InterPro"/>
</dbReference>
<dbReference type="GO" id="GO:0005524">
    <property type="term" value="F:ATP binding"/>
    <property type="evidence" value="ECO:0007669"/>
    <property type="project" value="UniProtKB-KW"/>
</dbReference>
<dbReference type="GO" id="GO:0016743">
    <property type="term" value="F:carboxyl- or carbamoyltransferase activity"/>
    <property type="evidence" value="ECO:0007669"/>
    <property type="project" value="UniProtKB-UniRule"/>
</dbReference>
<dbReference type="GO" id="GO:0006633">
    <property type="term" value="P:fatty acid biosynthetic process"/>
    <property type="evidence" value="ECO:0007669"/>
    <property type="project" value="UniProtKB-KW"/>
</dbReference>
<dbReference type="GO" id="GO:2001295">
    <property type="term" value="P:malonyl-CoA biosynthetic process"/>
    <property type="evidence" value="ECO:0007669"/>
    <property type="project" value="UniProtKB-UniRule"/>
</dbReference>
<dbReference type="Gene3D" id="3.90.226.10">
    <property type="entry name" value="2-enoyl-CoA Hydratase, Chain A, domain 1"/>
    <property type="match status" value="1"/>
</dbReference>
<dbReference type="HAMAP" id="MF_00823">
    <property type="entry name" value="AcetylCoA_CT_alpha"/>
    <property type="match status" value="1"/>
</dbReference>
<dbReference type="InterPro" id="IPR001095">
    <property type="entry name" value="Acetyl_CoA_COase_a_su"/>
</dbReference>
<dbReference type="InterPro" id="IPR029045">
    <property type="entry name" value="ClpP/crotonase-like_dom_sf"/>
</dbReference>
<dbReference type="InterPro" id="IPR011763">
    <property type="entry name" value="COA_CT_C"/>
</dbReference>
<dbReference type="NCBIfam" id="TIGR00513">
    <property type="entry name" value="accA"/>
    <property type="match status" value="1"/>
</dbReference>
<dbReference type="NCBIfam" id="NF041504">
    <property type="entry name" value="AccA_sub"/>
    <property type="match status" value="1"/>
</dbReference>
<dbReference type="NCBIfam" id="NF004344">
    <property type="entry name" value="PRK05724.1"/>
    <property type="match status" value="1"/>
</dbReference>
<dbReference type="PANTHER" id="PTHR42853">
    <property type="entry name" value="ACETYL-COENZYME A CARBOXYLASE CARBOXYL TRANSFERASE SUBUNIT ALPHA"/>
    <property type="match status" value="1"/>
</dbReference>
<dbReference type="PANTHER" id="PTHR42853:SF3">
    <property type="entry name" value="ACETYL-COENZYME A CARBOXYLASE CARBOXYL TRANSFERASE SUBUNIT ALPHA, CHLOROPLASTIC"/>
    <property type="match status" value="1"/>
</dbReference>
<dbReference type="Pfam" id="PF03255">
    <property type="entry name" value="ACCA"/>
    <property type="match status" value="1"/>
</dbReference>
<dbReference type="PRINTS" id="PR01069">
    <property type="entry name" value="ACCCTRFRASEA"/>
</dbReference>
<dbReference type="SUPFAM" id="SSF52096">
    <property type="entry name" value="ClpP/crotonase"/>
    <property type="match status" value="1"/>
</dbReference>
<dbReference type="PROSITE" id="PS50989">
    <property type="entry name" value="COA_CT_CTER"/>
    <property type="match status" value="1"/>
</dbReference>
<proteinExistence type="inferred from homology"/>
<keyword id="KW-0067">ATP-binding</keyword>
<keyword id="KW-0963">Cytoplasm</keyword>
<keyword id="KW-0275">Fatty acid biosynthesis</keyword>
<keyword id="KW-0276">Fatty acid metabolism</keyword>
<keyword id="KW-0444">Lipid biosynthesis</keyword>
<keyword id="KW-0443">Lipid metabolism</keyword>
<keyword id="KW-0547">Nucleotide-binding</keyword>
<keyword id="KW-0808">Transferase</keyword>
<sequence>MAYELEFEKPLVELRKKISELKEFTKHRDVDFSDEINKLEARLEKLENDIYANLSPWDRVQIARHPNRPTTLDYIERLFTNFFECHGDRCFGDDEAIVGGIAKYHGLPVTVIGHQRGKDTKENIRRNFGMPHPEGYRKALRLMKQAEKFGRPIICFIDTKGAYPGKAAEERGQSEAIARNLFEMAGLTVPVVCVVIGEGGSGGALALGVGNYVHMLENSTYSVISPEGAAAILWKDASLAKKAAETMKITAKDLKQLGVIDEIIPEVRGGAHRNVDEQAKYIDDVLKRSLRELLPLHAEQLIAQRYEKYKKIGDFVESQQHVSVM</sequence>
<name>ACCA_ANOFW</name>
<evidence type="ECO:0000255" key="1">
    <source>
        <dbReference type="HAMAP-Rule" id="MF_00823"/>
    </source>
</evidence>
<evidence type="ECO:0000255" key="2">
    <source>
        <dbReference type="PROSITE-ProRule" id="PRU01137"/>
    </source>
</evidence>
<organism>
    <name type="scientific">Anoxybacillus flavithermus (strain DSM 21510 / WK1)</name>
    <dbReference type="NCBI Taxonomy" id="491915"/>
    <lineage>
        <taxon>Bacteria</taxon>
        <taxon>Bacillati</taxon>
        <taxon>Bacillota</taxon>
        <taxon>Bacilli</taxon>
        <taxon>Bacillales</taxon>
        <taxon>Anoxybacillaceae</taxon>
        <taxon>Anoxybacillus</taxon>
    </lineage>
</organism>
<comment type="function">
    <text evidence="1">Component of the acetyl coenzyme A carboxylase (ACC) complex. First, biotin carboxylase catalyzes the carboxylation of biotin on its carrier protein (BCCP) and then the CO(2) group is transferred by the carboxyltransferase to acetyl-CoA to form malonyl-CoA.</text>
</comment>
<comment type="catalytic activity">
    <reaction evidence="1">
        <text>N(6)-carboxybiotinyl-L-lysyl-[protein] + acetyl-CoA = N(6)-biotinyl-L-lysyl-[protein] + malonyl-CoA</text>
        <dbReference type="Rhea" id="RHEA:54728"/>
        <dbReference type="Rhea" id="RHEA-COMP:10505"/>
        <dbReference type="Rhea" id="RHEA-COMP:10506"/>
        <dbReference type="ChEBI" id="CHEBI:57288"/>
        <dbReference type="ChEBI" id="CHEBI:57384"/>
        <dbReference type="ChEBI" id="CHEBI:83144"/>
        <dbReference type="ChEBI" id="CHEBI:83145"/>
        <dbReference type="EC" id="2.1.3.15"/>
    </reaction>
</comment>
<comment type="pathway">
    <text evidence="1">Lipid metabolism; malonyl-CoA biosynthesis; malonyl-CoA from acetyl-CoA: step 1/1.</text>
</comment>
<comment type="subunit">
    <text evidence="1">Acetyl-CoA carboxylase is a heterohexamer composed of biotin carboxyl carrier protein (AccB), biotin carboxylase (AccC) and two subunits each of ACCase subunit alpha (AccA) and ACCase subunit beta (AccD).</text>
</comment>
<comment type="subcellular location">
    <subcellularLocation>
        <location evidence="1">Cytoplasm</location>
    </subcellularLocation>
</comment>
<comment type="similarity">
    <text evidence="1">Belongs to the AccA family.</text>
</comment>
<accession>B7GGT0</accession>